<dbReference type="EC" id="7.1.1.-" evidence="2"/>
<dbReference type="EMBL" id="AP009369">
    <property type="protein sequence ID" value="BAF50075.1"/>
    <property type="status" value="ALT_SEQ"/>
    <property type="molecule type" value="Genomic_DNA"/>
</dbReference>
<dbReference type="RefSeq" id="YP_001123250.2">
    <property type="nucleotide sequence ID" value="NC_009268.1"/>
</dbReference>
<dbReference type="SMR" id="A4QK70"/>
<dbReference type="GeneID" id="4962569"/>
<dbReference type="GO" id="GO:0009535">
    <property type="term" value="C:chloroplast thylakoid membrane"/>
    <property type="evidence" value="ECO:0007669"/>
    <property type="project" value="UniProtKB-SubCell"/>
</dbReference>
<dbReference type="GO" id="GO:0008137">
    <property type="term" value="F:NADH dehydrogenase (ubiquinone) activity"/>
    <property type="evidence" value="ECO:0007669"/>
    <property type="project" value="InterPro"/>
</dbReference>
<dbReference type="GO" id="GO:0048039">
    <property type="term" value="F:ubiquinone binding"/>
    <property type="evidence" value="ECO:0007669"/>
    <property type="project" value="TreeGrafter"/>
</dbReference>
<dbReference type="GO" id="GO:0042773">
    <property type="term" value="P:ATP synthesis coupled electron transport"/>
    <property type="evidence" value="ECO:0007669"/>
    <property type="project" value="InterPro"/>
</dbReference>
<dbReference type="GO" id="GO:0015990">
    <property type="term" value="P:electron transport coupled proton transport"/>
    <property type="evidence" value="ECO:0007669"/>
    <property type="project" value="TreeGrafter"/>
</dbReference>
<dbReference type="HAMAP" id="MF_00491">
    <property type="entry name" value="NDH1_NuoM"/>
    <property type="match status" value="1"/>
</dbReference>
<dbReference type="InterPro" id="IPR022997">
    <property type="entry name" value="NADH_Q_OxRdtase_chain4"/>
</dbReference>
<dbReference type="InterPro" id="IPR010227">
    <property type="entry name" value="NADH_Q_OxRdtase_chainM/4"/>
</dbReference>
<dbReference type="InterPro" id="IPR003918">
    <property type="entry name" value="NADH_UbQ_OxRdtase"/>
</dbReference>
<dbReference type="InterPro" id="IPR001750">
    <property type="entry name" value="ND/Mrp_TM"/>
</dbReference>
<dbReference type="NCBIfam" id="TIGR01972">
    <property type="entry name" value="NDH_I_M"/>
    <property type="match status" value="1"/>
</dbReference>
<dbReference type="PANTHER" id="PTHR43507:SF21">
    <property type="entry name" value="NAD(P)H-QUINONE OXIDOREDUCTASE CHAIN 4, CHLOROPLASTIC"/>
    <property type="match status" value="1"/>
</dbReference>
<dbReference type="PANTHER" id="PTHR43507">
    <property type="entry name" value="NADH-UBIQUINONE OXIDOREDUCTASE CHAIN 4"/>
    <property type="match status" value="1"/>
</dbReference>
<dbReference type="Pfam" id="PF00361">
    <property type="entry name" value="Proton_antipo_M"/>
    <property type="match status" value="1"/>
</dbReference>
<dbReference type="PRINTS" id="PR01437">
    <property type="entry name" value="NUOXDRDTASE4"/>
</dbReference>
<accession>A4QK70</accession>
<name>NU4C_ARAHI</name>
<proteinExistence type="inferred from homology"/>
<comment type="catalytic activity">
    <reaction evidence="2">
        <text>a plastoquinone + NADH + (n+1) H(+)(in) = a plastoquinol + NAD(+) + n H(+)(out)</text>
        <dbReference type="Rhea" id="RHEA:42608"/>
        <dbReference type="Rhea" id="RHEA-COMP:9561"/>
        <dbReference type="Rhea" id="RHEA-COMP:9562"/>
        <dbReference type="ChEBI" id="CHEBI:15378"/>
        <dbReference type="ChEBI" id="CHEBI:17757"/>
        <dbReference type="ChEBI" id="CHEBI:57540"/>
        <dbReference type="ChEBI" id="CHEBI:57945"/>
        <dbReference type="ChEBI" id="CHEBI:62192"/>
    </reaction>
</comment>
<comment type="catalytic activity">
    <reaction evidence="2">
        <text>a plastoquinone + NADPH + (n+1) H(+)(in) = a plastoquinol + NADP(+) + n H(+)(out)</text>
        <dbReference type="Rhea" id="RHEA:42612"/>
        <dbReference type="Rhea" id="RHEA-COMP:9561"/>
        <dbReference type="Rhea" id="RHEA-COMP:9562"/>
        <dbReference type="ChEBI" id="CHEBI:15378"/>
        <dbReference type="ChEBI" id="CHEBI:17757"/>
        <dbReference type="ChEBI" id="CHEBI:57783"/>
        <dbReference type="ChEBI" id="CHEBI:58349"/>
        <dbReference type="ChEBI" id="CHEBI:62192"/>
    </reaction>
</comment>
<comment type="subcellular location">
    <subcellularLocation>
        <location evidence="2">Plastid</location>
        <location evidence="2">Chloroplast thylakoid membrane</location>
        <topology evidence="2">Multi-pass membrane protein</topology>
    </subcellularLocation>
</comment>
<comment type="RNA editing">
    <location>
        <position position="1" evidence="1"/>
    </location>
    <text evidence="1">The initiator methionine is created by RNA editing.</text>
</comment>
<comment type="similarity">
    <text evidence="2">Belongs to the complex I subunit 4 family.</text>
</comment>
<feature type="chain" id="PRO_0000343271" description="NAD(P)H-quinone oxidoreductase chain 4, chloroplastic">
    <location>
        <begin position="1"/>
        <end position="500"/>
    </location>
</feature>
<feature type="transmembrane region" description="Helical" evidence="2">
    <location>
        <begin position="4"/>
        <end position="24"/>
    </location>
</feature>
<feature type="transmembrane region" description="Helical" evidence="2">
    <location>
        <begin position="35"/>
        <end position="55"/>
    </location>
</feature>
<feature type="transmembrane region" description="Helical" evidence="2">
    <location>
        <begin position="87"/>
        <end position="107"/>
    </location>
</feature>
<feature type="transmembrane region" description="Helical" evidence="2">
    <location>
        <begin position="113"/>
        <end position="130"/>
    </location>
</feature>
<feature type="transmembrane region" description="Helical" evidence="2">
    <location>
        <begin position="134"/>
        <end position="154"/>
    </location>
</feature>
<feature type="transmembrane region" description="Helical" evidence="2">
    <location>
        <begin position="167"/>
        <end position="187"/>
    </location>
</feature>
<feature type="transmembrane region" description="Helical" evidence="2">
    <location>
        <begin position="211"/>
        <end position="231"/>
    </location>
</feature>
<feature type="transmembrane region" description="Helical" evidence="2">
    <location>
        <begin position="242"/>
        <end position="262"/>
    </location>
</feature>
<feature type="transmembrane region" description="Helical" evidence="2">
    <location>
        <begin position="272"/>
        <end position="292"/>
    </location>
</feature>
<feature type="transmembrane region" description="Helical" evidence="2">
    <location>
        <begin position="305"/>
        <end position="325"/>
    </location>
</feature>
<feature type="transmembrane region" description="Helical" evidence="2">
    <location>
        <begin position="330"/>
        <end position="350"/>
    </location>
</feature>
<feature type="transmembrane region" description="Helical" evidence="2">
    <location>
        <begin position="386"/>
        <end position="406"/>
    </location>
</feature>
<feature type="transmembrane region" description="Helical" evidence="2">
    <location>
        <begin position="416"/>
        <end position="436"/>
    </location>
</feature>
<feature type="transmembrane region" description="Helical" evidence="2">
    <location>
        <begin position="462"/>
        <end position="482"/>
    </location>
</feature>
<sequence length="500" mass="55943">MNDFPWLTIIVGFPISAGSLMLFLPHKGNKVNKWYTICICILELLITTYAFCYNFKMDDPLIQMSEDYKWINFFDFYWRLGIDGLSIGTILLTGFITTLAALAAFPVTRDSRFFHFLMLAMYSGQIGSFSSRDLLLFFIMWELELIPVYLLLSMWGGKKRLYSATKFILYTAGSSIFLLIGVLGISLYGSNEPTLNLELLANQSYPVTLEILFYIGFLIAFAVKSPIIPLHTWLPDTHGEAHYSTCMLLAGILLKMGAYGLVRINMELLPHAHSMFSPWLMVVGTIQIIYAASTSPGQRNLKKRIAYSSVSHMGFIIIGIGSITDPGLNGAILQIISHGFIGAALFFLAGTSYDRIRLIYLDEMGGTAISIPKIFTMFTILSMASLALPGMSGFVAELIVFFGIITSQKYFLISKILIIFVMAIGMILTPIYLLSMSRQMFYGYKLINVKNLSFFDSGPRELFLSISILLPIIGIGIYPDFVLSLASDKVESILSNYFYG</sequence>
<geneLocation type="chloroplast"/>
<reference key="1">
    <citation type="submission" date="2007-03" db="EMBL/GenBank/DDBJ databases">
        <title>Sequencing analysis of Arabis hirsuta chloroplast DNA.</title>
        <authorList>
            <person name="Hosouchi T."/>
            <person name="Tsuruoka H."/>
            <person name="Kotani H."/>
        </authorList>
    </citation>
    <scope>NUCLEOTIDE SEQUENCE [LARGE SCALE GENOMIC DNA]</scope>
</reference>
<keyword id="KW-0150">Chloroplast</keyword>
<keyword id="KW-0472">Membrane</keyword>
<keyword id="KW-0520">NAD</keyword>
<keyword id="KW-0521">NADP</keyword>
<keyword id="KW-0934">Plastid</keyword>
<keyword id="KW-0618">Plastoquinone</keyword>
<keyword id="KW-0874">Quinone</keyword>
<keyword id="KW-0691">RNA editing</keyword>
<keyword id="KW-0793">Thylakoid</keyword>
<keyword id="KW-1278">Translocase</keyword>
<keyword id="KW-0812">Transmembrane</keyword>
<keyword id="KW-1133">Transmembrane helix</keyword>
<organism>
    <name type="scientific">Arabis hirsuta</name>
    <name type="common">Hairy rock-cress</name>
    <name type="synonym">Turritis hirsuta</name>
    <dbReference type="NCBI Taxonomy" id="78191"/>
    <lineage>
        <taxon>Eukaryota</taxon>
        <taxon>Viridiplantae</taxon>
        <taxon>Streptophyta</taxon>
        <taxon>Embryophyta</taxon>
        <taxon>Tracheophyta</taxon>
        <taxon>Spermatophyta</taxon>
        <taxon>Magnoliopsida</taxon>
        <taxon>eudicotyledons</taxon>
        <taxon>Gunneridae</taxon>
        <taxon>Pentapetalae</taxon>
        <taxon>rosids</taxon>
        <taxon>malvids</taxon>
        <taxon>Brassicales</taxon>
        <taxon>Brassicaceae</taxon>
        <taxon>Arabideae</taxon>
        <taxon>Arabis</taxon>
    </lineage>
</organism>
<protein>
    <recommendedName>
        <fullName evidence="2">NAD(P)H-quinone oxidoreductase chain 4, chloroplastic</fullName>
        <ecNumber evidence="2">7.1.1.-</ecNumber>
    </recommendedName>
    <alternativeName>
        <fullName evidence="2">NAD(P)H dehydrogenase, chain 4</fullName>
    </alternativeName>
    <alternativeName>
        <fullName evidence="2">NADH-plastoquinone oxidoreductase chain 4</fullName>
    </alternativeName>
</protein>
<gene>
    <name evidence="2" type="primary">ndhD</name>
</gene>
<evidence type="ECO:0000250" key="1"/>
<evidence type="ECO:0000255" key="2">
    <source>
        <dbReference type="HAMAP-Rule" id="MF_00491"/>
    </source>
</evidence>